<gene>
    <name type="primary">T2A</name>
    <name type="ORF">GSPATT00008245001</name>
</gene>
<name>T2A_PARTE</name>
<feature type="signal peptide" evidence="2">
    <location>
        <begin position="1"/>
        <end position="19"/>
    </location>
</feature>
<feature type="propeptide" id="PRO_0000307846" evidence="1">
    <location>
        <begin position="20"/>
        <end position="48"/>
    </location>
</feature>
<feature type="chain" id="PRO_0000221508" description="Trichocyst matrix protein T2-A 1">
    <location>
        <begin position="49"/>
        <end position="183"/>
    </location>
</feature>
<feature type="propeptide" id="PRO_0000307847" evidence="1">
    <location>
        <begin position="184"/>
        <end position="238"/>
    </location>
</feature>
<feature type="chain" id="PRO_0000307848" description="Trichocyst matrix protein T2-A 2">
    <location>
        <begin position="239"/>
        <end position="386"/>
    </location>
</feature>
<feature type="coiled-coil region" evidence="2">
    <location>
        <begin position="51"/>
        <end position="154"/>
    </location>
</feature>
<feature type="coiled-coil region" evidence="2">
    <location>
        <begin position="293"/>
        <end position="332"/>
    </location>
</feature>
<reference key="1">
    <citation type="journal article" date="2006" name="Nature">
        <title>Global trends of whole-genome duplications revealed by the ciliate Paramecium tetraurelia.</title>
        <authorList>
            <person name="Aury J.-M."/>
            <person name="Jaillon O."/>
            <person name="Duret L."/>
            <person name="Noel B."/>
            <person name="Jubin C."/>
            <person name="Porcel B.M."/>
            <person name="Segurens B."/>
            <person name="Daubin V."/>
            <person name="Anthouard V."/>
            <person name="Aiach N."/>
            <person name="Arnaiz O."/>
            <person name="Billaut A."/>
            <person name="Beisson J."/>
            <person name="Blanc I."/>
            <person name="Bouhouche K."/>
            <person name="Camara F."/>
            <person name="Duharcourt S."/>
            <person name="Guigo R."/>
            <person name="Gogendeau D."/>
            <person name="Katinka M."/>
            <person name="Keller A.-M."/>
            <person name="Kissmehl R."/>
            <person name="Klotz C."/>
            <person name="Koll F."/>
            <person name="Le Mouel A."/>
            <person name="Lepere G."/>
            <person name="Malinsky S."/>
            <person name="Nowacki M."/>
            <person name="Nowak J.K."/>
            <person name="Plattner H."/>
            <person name="Poulain J."/>
            <person name="Ruiz F."/>
            <person name="Serrano V."/>
            <person name="Zagulski M."/>
            <person name="Dessen P."/>
            <person name="Betermier M."/>
            <person name="Weissenbach J."/>
            <person name="Scarpelli C."/>
            <person name="Schaechter V."/>
            <person name="Sperling L."/>
            <person name="Meyer E."/>
            <person name="Cohen J."/>
            <person name="Wincker P."/>
        </authorList>
    </citation>
    <scope>NUCLEOTIDE SEQUENCE [LARGE SCALE GENOMIC DNA]</scope>
    <source>
        <strain>Stock d4-2</strain>
    </source>
</reference>
<reference key="2">
    <citation type="journal article" date="1995" name="Mol. Biol. Cell">
        <title>A large multigene family codes for the polypeptides of the crystalline trichocyst matrix in Paramecium.</title>
        <authorList>
            <person name="Madeddu L."/>
            <person name="Gautier M.-C."/>
            <person name="Vayssie L."/>
            <person name="Houari A."/>
            <person name="Sperling L."/>
        </authorList>
    </citation>
    <scope>NUCLEOTIDE SEQUENCE [GENOMIC DNA] OF 49-71</scope>
    <source>
        <strain>Stock d4-2</strain>
    </source>
</reference>
<reference key="3">
    <citation type="journal article" date="1994" name="Biochimie">
        <title>Protein processing and morphogenesis of secretory granules in Paramecium.</title>
        <authorList>
            <person name="Madeddu L."/>
            <person name="Gautier M.-C."/>
            <person name="le Caer J.-P."/>
            <person name="de Loubresse N."/>
            <person name="Sperling L."/>
        </authorList>
    </citation>
    <scope>PARTIAL PROTEIN SEQUENCE</scope>
    <source>
        <strain>Stock d4-2</strain>
    </source>
</reference>
<dbReference type="EMBL" id="CT868097">
    <property type="protein sequence ID" value="CAK71696.1"/>
    <property type="molecule type" value="Genomic_DNA"/>
</dbReference>
<dbReference type="EMBL" id="U27509">
    <property type="protein sequence ID" value="AAA92609.1"/>
    <property type="molecule type" value="Genomic_DNA"/>
</dbReference>
<dbReference type="RefSeq" id="XP_001439093.1">
    <property type="nucleotide sequence ID" value="XM_001439056.1"/>
</dbReference>
<dbReference type="SMR" id="Q27173"/>
<dbReference type="EnsemblProtists" id="CAK71696">
    <property type="protein sequence ID" value="CAK71696"/>
    <property type="gene ID" value="GSPATT00008245001"/>
</dbReference>
<dbReference type="GeneID" id="5024878"/>
<dbReference type="KEGG" id="ptm:GSPATT00008245001"/>
<dbReference type="eggNOG" id="ENOG502SUHG">
    <property type="taxonomic scope" value="Eukaryota"/>
</dbReference>
<dbReference type="HOGENOM" id="CLU_062544_0_0_1"/>
<dbReference type="InParanoid" id="Q27173"/>
<dbReference type="OMA" id="ADNIEHG"/>
<dbReference type="OrthoDB" id="294361at2759"/>
<dbReference type="Proteomes" id="UP000000600">
    <property type="component" value="Partially assembled WGS sequence"/>
</dbReference>
<dbReference type="GO" id="GO:0055039">
    <property type="term" value="C:trichocyst"/>
    <property type="evidence" value="ECO:0007669"/>
    <property type="project" value="UniProtKB-SubCell"/>
</dbReference>
<evidence type="ECO:0000250" key="1"/>
<evidence type="ECO:0000255" key="2"/>
<evidence type="ECO:0000305" key="3"/>
<keyword id="KW-0175">Coiled coil</keyword>
<keyword id="KW-0903">Direct protein sequencing</keyword>
<keyword id="KW-1185">Reference proteome</keyword>
<keyword id="KW-0732">Signal</keyword>
<protein>
    <recommendedName>
        <fullName>Trichocyst matrix protein T2-A</fullName>
    </recommendedName>
    <alternativeName>
        <fullName>Secretory granule protein T2-A</fullName>
    </alternativeName>
    <alternativeName>
        <fullName>TMP 2-A</fullName>
    </alternativeName>
    <component>
        <recommendedName>
            <fullName>Trichocyst matrix protein T2-A 1</fullName>
        </recommendedName>
    </component>
    <component>
        <recommendedName>
            <fullName>Trichocyst matrix protein T2-A 2</fullName>
        </recommendedName>
    </component>
</protein>
<proteinExistence type="evidence at protein level"/>
<comment type="function">
    <text>Structural protein that crystallize inside the trichocyst matrix.</text>
</comment>
<comment type="subcellular location">
    <subcellularLocation>
        <location>Trichocyst</location>
    </subcellularLocation>
    <text>These are architecturally complex secretory storage granules-docked at the plasma membrane, ready to rapidly respond to an exocytotic stimulus.</text>
</comment>
<comment type="similarity">
    <text evidence="3">Belongs to the TMP family.</text>
</comment>
<comment type="online information" name="Protein Spotlight">
    <link uri="https://www.proteinspotlight.org/back_issues/003"/>
    <text>The arsenal of Paramecium - Issue 3 of October 2000</text>
</comment>
<organism>
    <name type="scientific">Paramecium tetraurelia</name>
    <dbReference type="NCBI Taxonomy" id="5888"/>
    <lineage>
        <taxon>Eukaryota</taxon>
        <taxon>Sar</taxon>
        <taxon>Alveolata</taxon>
        <taxon>Ciliophora</taxon>
        <taxon>Intramacronucleata</taxon>
        <taxon>Oligohymenophorea</taxon>
        <taxon>Peniculida</taxon>
        <taxon>Parameciidae</taxon>
        <taxon>Paramecium</taxon>
    </lineage>
</organism>
<sequence>MKTVILALALIVLASSTQADVIATIKKIDQSPFGRTLFDTIYLELQTGDPLDRLLSTLTDLEDRYVAEQKEDDAKNQEYQGACTVDISAFDKDLAESNRKKIELEARLEGQLYPQRSILEGLVAQKKAEVKGYQKDLDELDAQRAEEHEDFEEKVLEHQEATAIIAEARRLFADNIEHGSFIQKGKATKQTHKFTKEVASMIQKHFTTSAKKTAKFQHRKGYSKLFKAFATIASKVEQLADAGAVQKIIDLADELLAKIADSLSLLRFAEDKRVEAYKKSRNFIVISLNVAGSALANATSDLASLNDIIAQVEASLDTTEQRIENVSADRHDRFTQCEEAVQDYQDARAARTSDRDVVSQTIGLVNKELRTLREQLALRQQAGEEI</sequence>
<accession>Q27173</accession>
<accession>A0CLM9</accession>